<evidence type="ECO:0000250" key="1"/>
<evidence type="ECO:0000250" key="2">
    <source>
        <dbReference type="UniProtKB" id="Q15052"/>
    </source>
</evidence>
<evidence type="ECO:0000255" key="3">
    <source>
        <dbReference type="PROSITE-ProRule" id="PRU00044"/>
    </source>
</evidence>
<evidence type="ECO:0000255" key="4">
    <source>
        <dbReference type="PROSITE-ProRule" id="PRU00062"/>
    </source>
</evidence>
<evidence type="ECO:0000255" key="5">
    <source>
        <dbReference type="PROSITE-ProRule" id="PRU00145"/>
    </source>
</evidence>
<evidence type="ECO:0000255" key="6">
    <source>
        <dbReference type="PROSITE-ProRule" id="PRU00192"/>
    </source>
</evidence>
<evidence type="ECO:0000256" key="7">
    <source>
        <dbReference type="SAM" id="MobiDB-lite"/>
    </source>
</evidence>
<evidence type="ECO:0000269" key="8">
    <source>
    </source>
</evidence>
<evidence type="ECO:0000269" key="9">
    <source>
    </source>
</evidence>
<evidence type="ECO:0007744" key="10">
    <source>
    </source>
</evidence>
<evidence type="ECO:0007744" key="11">
    <source>
    </source>
</evidence>
<evidence type="ECO:0007744" key="12">
    <source>
    </source>
</evidence>
<evidence type="ECO:0007829" key="13">
    <source>
        <dbReference type="PDB" id="1V61"/>
    </source>
</evidence>
<gene>
    <name type="primary">Arhgef6</name>
</gene>
<comment type="function">
    <text evidence="1">Acts as a RAC1 guanine nucleotide exchange factor (GEF).</text>
</comment>
<comment type="subunit">
    <text evidence="2 9">Interacts with PAK kinases through the SH3 domain. Interacts with GIT1. Component of cytoplasmic complexes, which also contain PXN, GIT1 and PAK1. Interacts with BIN2. Identified in a complex with BIN2 and GIT2 (By similarity). Interacts with PARVB (PubMed:18325335). Interacts with PARVG; the guanine nucleotide exchange factor activity of ARHGEF6 is essential for PARVG-induced enhancement of cell spreading (By similarity).</text>
</comment>
<comment type="interaction">
    <interactant intactId="EBI-6272809">
        <id>Q8K4I3</id>
    </interactant>
    <interactant intactId="EBI-1047679">
        <id>Q9HBI1</id>
        <label>PARVB</label>
    </interactant>
    <organismsDiffer>true</organismsDiffer>
    <experiments>3</experiments>
</comment>
<comment type="subcellular location">
    <subcellularLocation>
        <location evidence="9">Cell projection</location>
        <location evidence="9">Lamellipodium</location>
    </subcellularLocation>
</comment>
<comment type="tissue specificity">
    <text evidence="8">Detected in adult heart, spleen, lung, skeletal muscle, kidney and testis. Detected throughout embryogenesis.</text>
</comment>
<feature type="chain" id="PRO_0000080918" description="Rho guanine nucleotide exchange factor 6">
    <location>
        <begin position="1"/>
        <end position="771"/>
    </location>
</feature>
<feature type="domain" description="Calponin-homology (CH)" evidence="3">
    <location>
        <begin position="1"/>
        <end position="111"/>
    </location>
</feature>
<feature type="domain" description="SH3" evidence="6">
    <location>
        <begin position="159"/>
        <end position="218"/>
    </location>
</feature>
<feature type="domain" description="DH" evidence="4">
    <location>
        <begin position="240"/>
        <end position="420"/>
    </location>
</feature>
<feature type="domain" description="PH" evidence="5">
    <location>
        <begin position="442"/>
        <end position="547"/>
    </location>
</feature>
<feature type="region of interest" description="Disordered" evidence="7">
    <location>
        <begin position="115"/>
        <end position="157"/>
    </location>
</feature>
<feature type="region of interest" description="Disordered" evidence="7">
    <location>
        <begin position="556"/>
        <end position="580"/>
    </location>
</feature>
<feature type="compositionally biased region" description="Low complexity" evidence="7">
    <location>
        <begin position="122"/>
        <end position="131"/>
    </location>
</feature>
<feature type="compositionally biased region" description="Low complexity" evidence="7">
    <location>
        <begin position="556"/>
        <end position="572"/>
    </location>
</feature>
<feature type="modified residue" description="Phosphoserine" evidence="2">
    <location>
        <position position="126"/>
    </location>
</feature>
<feature type="modified residue" description="Phosphothreonine" evidence="2">
    <location>
        <position position="133"/>
    </location>
</feature>
<feature type="modified residue" description="Phosphoserine" evidence="2">
    <location>
        <position position="224"/>
    </location>
</feature>
<feature type="modified residue" description="Phosphoserine" evidence="10 12">
    <location>
        <position position="487"/>
    </location>
</feature>
<feature type="modified residue" description="Phosphoserine" evidence="12">
    <location>
        <position position="639"/>
    </location>
</feature>
<feature type="modified residue" description="Phosphoserine" evidence="10 11 12">
    <location>
        <position position="679"/>
    </location>
</feature>
<feature type="turn" evidence="13">
    <location>
        <begin position="430"/>
        <end position="432"/>
    </location>
</feature>
<feature type="turn" evidence="13">
    <location>
        <begin position="444"/>
        <end position="446"/>
    </location>
</feature>
<feature type="strand" evidence="13">
    <location>
        <begin position="452"/>
        <end position="457"/>
    </location>
</feature>
<feature type="strand" evidence="13">
    <location>
        <begin position="460"/>
        <end position="463"/>
    </location>
</feature>
<feature type="strand" evidence="13">
    <location>
        <begin position="467"/>
        <end position="472"/>
    </location>
</feature>
<feature type="strand" evidence="13">
    <location>
        <begin position="477"/>
        <end position="481"/>
    </location>
</feature>
<feature type="strand" evidence="13">
    <location>
        <begin position="483"/>
        <end position="487"/>
    </location>
</feature>
<feature type="strand" evidence="13">
    <location>
        <begin position="490"/>
        <end position="495"/>
    </location>
</feature>
<feature type="turn" evidence="13">
    <location>
        <begin position="497"/>
        <end position="499"/>
    </location>
</feature>
<feature type="strand" evidence="13">
    <location>
        <begin position="507"/>
        <end position="511"/>
    </location>
</feature>
<feature type="strand" evidence="13">
    <location>
        <begin position="515"/>
        <end position="518"/>
    </location>
</feature>
<feature type="strand" evidence="13">
    <location>
        <begin position="520"/>
        <end position="522"/>
    </location>
</feature>
<feature type="strand" evidence="13">
    <location>
        <begin position="524"/>
        <end position="527"/>
    </location>
</feature>
<feature type="helix" evidence="13">
    <location>
        <begin position="533"/>
        <end position="546"/>
    </location>
</feature>
<keyword id="KW-0002">3D-structure</keyword>
<keyword id="KW-0966">Cell projection</keyword>
<keyword id="KW-0344">Guanine-nucleotide releasing factor</keyword>
<keyword id="KW-0597">Phosphoprotein</keyword>
<keyword id="KW-1185">Reference proteome</keyword>
<keyword id="KW-0728">SH3 domain</keyword>
<name>ARHG6_MOUSE</name>
<accession>Q8K4I3</accession>
<accession>Q8C9V4</accession>
<proteinExistence type="evidence at protein level"/>
<sequence length="771" mass="87051">MNPEERLVTWLISLGVLESPKKTVCDPEEFLKSSLKNGVVLCKLINRLLPGSVEKYCLEPQTEADCIDNINDFLKGCATLQVEVFEPDDLYSGANFSKVLNTLLAVNKATEDQLSERPCGRSSSLSAATSSQTNPQVAVPSTAPEQHSEEKAEMTENGSHQLIVKARFNFKQTNEDELSVCKGDIIYVTRVEEGGWWEGTLNGRTGWFPSNYVREIKPSERPLSPKAIKGFDTAPLTKNYYTVVLQNILDTEKEYAKELQSLLVTYLRPLQSNNNLSTVEFTCLLGNFEEVCTFQQTLCQALEECSKFPENQHKVGGCLLNLMPHFKSMYLAYCANHPSAVNVLTQHSDDLERFMENQGASSPGILILTTSLSKPFMRLEKYVTLLQELERHMEDTHPDHQDILKAIIAFKTLMGQCQDLRKRKQLELQILSEPIQAWEGDDIKTLGNVIFMSQVVMQHGACEEKEERYFLLFSSVLIMLSASPRMSGFMYQGKIPIAGMVVNRLDEIEGSDCMFEITGSTVERIVVHCNNNQDFQEWMEQLNRLTKGPTSCGSLSKTSSSSCSTHSSFSSTGQPRGPLEPPQIIKPWSLSCLRPAPPLRPSAALGYKERMSYILKESSKSPKTMKKFLHKRKTERKASEEEYVIRKSTAALEEDAQILKVIEAYCTSASFQQGTRKDSVPQVLLPEEEKLIIEETRSNGQTIIEEKSLVDTVYALKDEVKELKQENKKMKQCLEEELKSRKDLEKLVRKLLKQTDECIRSESSSKTSILQ</sequence>
<reference key="1">
    <citation type="journal article" date="2001" name="Cytogenet. Cell Genet.">
        <title>The mouse Arhgef6 gene: cDNA sequence, expression analysis, and chromosome assignment.</title>
        <authorList>
            <person name="Kutsche K."/>
            <person name="Gal A."/>
        </authorList>
    </citation>
    <scope>NUCLEOTIDE SEQUENCE [MRNA]</scope>
    <scope>TISSUE SPECIFICITY</scope>
    <source>
        <strain>C57BL/6J</strain>
    </source>
</reference>
<reference key="2">
    <citation type="journal article" date="2005" name="Science">
        <title>The transcriptional landscape of the mammalian genome.</title>
        <authorList>
            <person name="Carninci P."/>
            <person name="Kasukawa T."/>
            <person name="Katayama S."/>
            <person name="Gough J."/>
            <person name="Frith M.C."/>
            <person name="Maeda N."/>
            <person name="Oyama R."/>
            <person name="Ravasi T."/>
            <person name="Lenhard B."/>
            <person name="Wells C."/>
            <person name="Kodzius R."/>
            <person name="Shimokawa K."/>
            <person name="Bajic V.B."/>
            <person name="Brenner S.E."/>
            <person name="Batalov S."/>
            <person name="Forrest A.R."/>
            <person name="Zavolan M."/>
            <person name="Davis M.J."/>
            <person name="Wilming L.G."/>
            <person name="Aidinis V."/>
            <person name="Allen J.E."/>
            <person name="Ambesi-Impiombato A."/>
            <person name="Apweiler R."/>
            <person name="Aturaliya R.N."/>
            <person name="Bailey T.L."/>
            <person name="Bansal M."/>
            <person name="Baxter L."/>
            <person name="Beisel K.W."/>
            <person name="Bersano T."/>
            <person name="Bono H."/>
            <person name="Chalk A.M."/>
            <person name="Chiu K.P."/>
            <person name="Choudhary V."/>
            <person name="Christoffels A."/>
            <person name="Clutterbuck D.R."/>
            <person name="Crowe M.L."/>
            <person name="Dalla E."/>
            <person name="Dalrymple B.P."/>
            <person name="de Bono B."/>
            <person name="Della Gatta G."/>
            <person name="di Bernardo D."/>
            <person name="Down T."/>
            <person name="Engstrom P."/>
            <person name="Fagiolini M."/>
            <person name="Faulkner G."/>
            <person name="Fletcher C.F."/>
            <person name="Fukushima T."/>
            <person name="Furuno M."/>
            <person name="Futaki S."/>
            <person name="Gariboldi M."/>
            <person name="Georgii-Hemming P."/>
            <person name="Gingeras T.R."/>
            <person name="Gojobori T."/>
            <person name="Green R.E."/>
            <person name="Gustincich S."/>
            <person name="Harbers M."/>
            <person name="Hayashi Y."/>
            <person name="Hensch T.K."/>
            <person name="Hirokawa N."/>
            <person name="Hill D."/>
            <person name="Huminiecki L."/>
            <person name="Iacono M."/>
            <person name="Ikeo K."/>
            <person name="Iwama A."/>
            <person name="Ishikawa T."/>
            <person name="Jakt M."/>
            <person name="Kanapin A."/>
            <person name="Katoh M."/>
            <person name="Kawasawa Y."/>
            <person name="Kelso J."/>
            <person name="Kitamura H."/>
            <person name="Kitano H."/>
            <person name="Kollias G."/>
            <person name="Krishnan S.P."/>
            <person name="Kruger A."/>
            <person name="Kummerfeld S.K."/>
            <person name="Kurochkin I.V."/>
            <person name="Lareau L.F."/>
            <person name="Lazarevic D."/>
            <person name="Lipovich L."/>
            <person name="Liu J."/>
            <person name="Liuni S."/>
            <person name="McWilliam S."/>
            <person name="Madan Babu M."/>
            <person name="Madera M."/>
            <person name="Marchionni L."/>
            <person name="Matsuda H."/>
            <person name="Matsuzawa S."/>
            <person name="Miki H."/>
            <person name="Mignone F."/>
            <person name="Miyake S."/>
            <person name="Morris K."/>
            <person name="Mottagui-Tabar S."/>
            <person name="Mulder N."/>
            <person name="Nakano N."/>
            <person name="Nakauchi H."/>
            <person name="Ng P."/>
            <person name="Nilsson R."/>
            <person name="Nishiguchi S."/>
            <person name="Nishikawa S."/>
            <person name="Nori F."/>
            <person name="Ohara O."/>
            <person name="Okazaki Y."/>
            <person name="Orlando V."/>
            <person name="Pang K.C."/>
            <person name="Pavan W.J."/>
            <person name="Pavesi G."/>
            <person name="Pesole G."/>
            <person name="Petrovsky N."/>
            <person name="Piazza S."/>
            <person name="Reed J."/>
            <person name="Reid J.F."/>
            <person name="Ring B.Z."/>
            <person name="Ringwald M."/>
            <person name="Rost B."/>
            <person name="Ruan Y."/>
            <person name="Salzberg S.L."/>
            <person name="Sandelin A."/>
            <person name="Schneider C."/>
            <person name="Schoenbach C."/>
            <person name="Sekiguchi K."/>
            <person name="Semple C.A."/>
            <person name="Seno S."/>
            <person name="Sessa L."/>
            <person name="Sheng Y."/>
            <person name="Shibata Y."/>
            <person name="Shimada H."/>
            <person name="Shimada K."/>
            <person name="Silva D."/>
            <person name="Sinclair B."/>
            <person name="Sperling S."/>
            <person name="Stupka E."/>
            <person name="Sugiura K."/>
            <person name="Sultana R."/>
            <person name="Takenaka Y."/>
            <person name="Taki K."/>
            <person name="Tammoja K."/>
            <person name="Tan S.L."/>
            <person name="Tang S."/>
            <person name="Taylor M.S."/>
            <person name="Tegner J."/>
            <person name="Teichmann S.A."/>
            <person name="Ueda H.R."/>
            <person name="van Nimwegen E."/>
            <person name="Verardo R."/>
            <person name="Wei C.L."/>
            <person name="Yagi K."/>
            <person name="Yamanishi H."/>
            <person name="Zabarovsky E."/>
            <person name="Zhu S."/>
            <person name="Zimmer A."/>
            <person name="Hide W."/>
            <person name="Bult C."/>
            <person name="Grimmond S.M."/>
            <person name="Teasdale R.D."/>
            <person name="Liu E.T."/>
            <person name="Brusic V."/>
            <person name="Quackenbush J."/>
            <person name="Wahlestedt C."/>
            <person name="Mattick J.S."/>
            <person name="Hume D.A."/>
            <person name="Kai C."/>
            <person name="Sasaki D."/>
            <person name="Tomaru Y."/>
            <person name="Fukuda S."/>
            <person name="Kanamori-Katayama M."/>
            <person name="Suzuki M."/>
            <person name="Aoki J."/>
            <person name="Arakawa T."/>
            <person name="Iida J."/>
            <person name="Imamura K."/>
            <person name="Itoh M."/>
            <person name="Kato T."/>
            <person name="Kawaji H."/>
            <person name="Kawagashira N."/>
            <person name="Kawashima T."/>
            <person name="Kojima M."/>
            <person name="Kondo S."/>
            <person name="Konno H."/>
            <person name="Nakano K."/>
            <person name="Ninomiya N."/>
            <person name="Nishio T."/>
            <person name="Okada M."/>
            <person name="Plessy C."/>
            <person name="Shibata K."/>
            <person name="Shiraki T."/>
            <person name="Suzuki S."/>
            <person name="Tagami M."/>
            <person name="Waki K."/>
            <person name="Watahiki A."/>
            <person name="Okamura-Oho Y."/>
            <person name="Suzuki H."/>
            <person name="Kawai J."/>
            <person name="Hayashizaki Y."/>
        </authorList>
    </citation>
    <scope>NUCLEOTIDE SEQUENCE [LARGE SCALE MRNA] OF 1-622</scope>
    <source>
        <strain>C57BL/6J</strain>
        <tissue>Thymus</tissue>
    </source>
</reference>
<reference key="3">
    <citation type="journal article" date="2007" name="Mol. Cell. Proteomics">
        <title>Qualitative and quantitative analyses of protein phosphorylation in naive and stimulated mouse synaptosomal preparations.</title>
        <authorList>
            <person name="Munton R.P."/>
            <person name="Tweedie-Cullen R."/>
            <person name="Livingstone-Zatchej M."/>
            <person name="Weinandy F."/>
            <person name="Waidelich M."/>
            <person name="Longo D."/>
            <person name="Gehrig P."/>
            <person name="Potthast F."/>
            <person name="Rutishauser D."/>
            <person name="Gerrits B."/>
            <person name="Panse C."/>
            <person name="Schlapbach R."/>
            <person name="Mansuy I.M."/>
        </authorList>
    </citation>
    <scope>IDENTIFICATION BY MASS SPECTROMETRY [LARGE SCALE ANALYSIS]</scope>
    <source>
        <tissue>Brain cortex</tissue>
    </source>
</reference>
<reference key="4">
    <citation type="journal article" date="2007" name="Proc. Natl. Acad. Sci. U.S.A.">
        <title>Large-scale phosphorylation analysis of mouse liver.</title>
        <authorList>
            <person name="Villen J."/>
            <person name="Beausoleil S.A."/>
            <person name="Gerber S.A."/>
            <person name="Gygi S.P."/>
        </authorList>
    </citation>
    <scope>PHOSPHORYLATION [LARGE SCALE ANALYSIS] AT SER-487 AND SER-679</scope>
    <scope>IDENTIFICATION BY MASS SPECTROMETRY [LARGE SCALE ANALYSIS]</scope>
    <source>
        <tissue>Liver</tissue>
    </source>
</reference>
<reference key="5">
    <citation type="journal article" date="2008" name="FEBS Lett.">
        <title>Affixin activates Rac1 via betaPIX in C2C12 myoblast.</title>
        <authorList>
            <person name="Matsuda C."/>
            <person name="Kameyama K."/>
            <person name="Suzuki A."/>
            <person name="Mishima W."/>
            <person name="Yamaji S."/>
            <person name="Okamoto H."/>
            <person name="Nishino I."/>
            <person name="Hayashi Y.K."/>
        </authorList>
    </citation>
    <scope>SUBCELLULAR LOCATION</scope>
    <scope>INTERACTION WITH PARVB</scope>
</reference>
<reference key="6">
    <citation type="journal article" date="2009" name="Immunity">
        <title>The phagosomal proteome in interferon-gamma-activated macrophages.</title>
        <authorList>
            <person name="Trost M."/>
            <person name="English L."/>
            <person name="Lemieux S."/>
            <person name="Courcelles M."/>
            <person name="Desjardins M."/>
            <person name="Thibault P."/>
        </authorList>
    </citation>
    <scope>PHOSPHORYLATION [LARGE SCALE ANALYSIS] AT SER-679</scope>
    <scope>IDENTIFICATION BY MASS SPECTROMETRY [LARGE SCALE ANALYSIS]</scope>
</reference>
<reference key="7">
    <citation type="journal article" date="2010" name="Cell">
        <title>A tissue-specific atlas of mouse protein phosphorylation and expression.</title>
        <authorList>
            <person name="Huttlin E.L."/>
            <person name="Jedrychowski M.P."/>
            <person name="Elias J.E."/>
            <person name="Goswami T."/>
            <person name="Rad R."/>
            <person name="Beausoleil S.A."/>
            <person name="Villen J."/>
            <person name="Haas W."/>
            <person name="Sowa M.E."/>
            <person name="Gygi S.P."/>
        </authorList>
    </citation>
    <scope>PHOSPHORYLATION [LARGE SCALE ANALYSIS] AT SER-487; SER-639 AND SER-679</scope>
    <scope>IDENTIFICATION BY MASS SPECTROMETRY [LARGE SCALE ANALYSIS]</scope>
    <source>
        <tissue>Brain</tissue>
        <tissue>Brown adipose tissue</tissue>
        <tissue>Heart</tissue>
        <tissue>Kidney</tissue>
        <tissue>Liver</tissue>
        <tissue>Lung</tissue>
        <tissue>Spleen</tissue>
        <tissue>Testis</tissue>
    </source>
</reference>
<reference key="8">
    <citation type="submission" date="2004-05" db="PDB data bank">
        <title>Solution structure of the pleckstrin homology domain of alpha-PIX.</title>
        <authorList>
            <consortium name="RIKEN structural genomics initiative (RSGI)"/>
        </authorList>
    </citation>
    <scope>STRUCTURE BY NMR OF 429-547</scope>
</reference>
<organism>
    <name type="scientific">Mus musculus</name>
    <name type="common">Mouse</name>
    <dbReference type="NCBI Taxonomy" id="10090"/>
    <lineage>
        <taxon>Eukaryota</taxon>
        <taxon>Metazoa</taxon>
        <taxon>Chordata</taxon>
        <taxon>Craniata</taxon>
        <taxon>Vertebrata</taxon>
        <taxon>Euteleostomi</taxon>
        <taxon>Mammalia</taxon>
        <taxon>Eutheria</taxon>
        <taxon>Euarchontoglires</taxon>
        <taxon>Glires</taxon>
        <taxon>Rodentia</taxon>
        <taxon>Myomorpha</taxon>
        <taxon>Muroidea</taxon>
        <taxon>Muridae</taxon>
        <taxon>Murinae</taxon>
        <taxon>Mus</taxon>
        <taxon>Mus</taxon>
    </lineage>
</organism>
<protein>
    <recommendedName>
        <fullName>Rho guanine nucleotide exchange factor 6</fullName>
    </recommendedName>
    <alternativeName>
        <fullName>Alpha-PIX</fullName>
    </alternativeName>
    <alternativeName>
        <fullName>Rac/Cdc42 guanine nucleotide exchange factor 6</fullName>
    </alternativeName>
</protein>
<dbReference type="EMBL" id="AF393831">
    <property type="protein sequence ID" value="AAM94903.1"/>
    <property type="molecule type" value="mRNA"/>
</dbReference>
<dbReference type="EMBL" id="AK040468">
    <property type="protein sequence ID" value="BAC30599.1"/>
    <property type="molecule type" value="mRNA"/>
</dbReference>
<dbReference type="CCDS" id="CCDS40984.2"/>
<dbReference type="RefSeq" id="NP_690014.3">
    <property type="nucleotide sequence ID" value="NM_152801.3"/>
</dbReference>
<dbReference type="PDB" id="1V61">
    <property type="method" value="NMR"/>
    <property type="chains" value="A=429-547"/>
</dbReference>
<dbReference type="PDBsum" id="1V61"/>
<dbReference type="BMRB" id="Q8K4I3"/>
<dbReference type="SMR" id="Q8K4I3"/>
<dbReference type="BioGRID" id="215941">
    <property type="interactions" value="11"/>
</dbReference>
<dbReference type="FunCoup" id="Q8K4I3">
    <property type="interactions" value="340"/>
</dbReference>
<dbReference type="IntAct" id="Q8K4I3">
    <property type="interactions" value="5"/>
</dbReference>
<dbReference type="MINT" id="Q8K4I3"/>
<dbReference type="STRING" id="10090.ENSMUSP00000033468"/>
<dbReference type="GlyGen" id="Q8K4I3">
    <property type="glycosylation" value="2 sites, 1 O-linked glycan (1 site)"/>
</dbReference>
<dbReference type="iPTMnet" id="Q8K4I3"/>
<dbReference type="PhosphoSitePlus" id="Q8K4I3"/>
<dbReference type="jPOST" id="Q8K4I3"/>
<dbReference type="PaxDb" id="10090-ENSMUSP00000033468"/>
<dbReference type="ProteomicsDB" id="265082"/>
<dbReference type="DNASU" id="73341"/>
<dbReference type="Ensembl" id="ENSMUST00000033468.11">
    <property type="protein sequence ID" value="ENSMUSP00000033468.6"/>
    <property type="gene ID" value="ENSMUSG00000031133.13"/>
</dbReference>
<dbReference type="GeneID" id="73341"/>
<dbReference type="KEGG" id="mmu:73341"/>
<dbReference type="AGR" id="MGI:1920591"/>
<dbReference type="CTD" id="9459"/>
<dbReference type="MGI" id="MGI:1920591">
    <property type="gene designation" value="Arhgef6"/>
</dbReference>
<dbReference type="eggNOG" id="KOG2070">
    <property type="taxonomic scope" value="Eukaryota"/>
</dbReference>
<dbReference type="GeneTree" id="ENSGT00940000158723"/>
<dbReference type="InParanoid" id="Q8K4I3"/>
<dbReference type="OrthoDB" id="6019202at2759"/>
<dbReference type="PhylomeDB" id="Q8K4I3"/>
<dbReference type="Reactome" id="R-MMU-193648">
    <property type="pathway name" value="NRAGE signals death through JNK"/>
</dbReference>
<dbReference type="Reactome" id="R-MMU-416482">
    <property type="pathway name" value="G alpha (12/13) signalling events"/>
</dbReference>
<dbReference type="Reactome" id="R-MMU-446388">
    <property type="pathway name" value="Regulation of cytoskeletal remodeling and cell spreading by IPP complex components"/>
</dbReference>
<dbReference type="Reactome" id="R-MMU-8964616">
    <property type="pathway name" value="G beta:gamma signalling through CDC42"/>
</dbReference>
<dbReference type="Reactome" id="R-MMU-9013148">
    <property type="pathway name" value="CDC42 GTPase cycle"/>
</dbReference>
<dbReference type="Reactome" id="R-MMU-9013149">
    <property type="pathway name" value="RAC1 GTPase cycle"/>
</dbReference>
<dbReference type="Reactome" id="R-MMU-9013420">
    <property type="pathway name" value="RHOU GTPase cycle"/>
</dbReference>
<dbReference type="BioGRID-ORCS" id="73341">
    <property type="hits" value="3 hits in 78 CRISPR screens"/>
</dbReference>
<dbReference type="ChiTaRS" id="Arhgef6">
    <property type="organism name" value="mouse"/>
</dbReference>
<dbReference type="EvolutionaryTrace" id="Q8K4I3"/>
<dbReference type="PRO" id="PR:Q8K4I3"/>
<dbReference type="Proteomes" id="UP000000589">
    <property type="component" value="Chromosome X"/>
</dbReference>
<dbReference type="RNAct" id="Q8K4I3">
    <property type="molecule type" value="protein"/>
</dbReference>
<dbReference type="GO" id="GO:0005911">
    <property type="term" value="C:cell-cell junction"/>
    <property type="evidence" value="ECO:0000314"/>
    <property type="project" value="MGI"/>
</dbReference>
<dbReference type="GO" id="GO:0030027">
    <property type="term" value="C:lamellipodium"/>
    <property type="evidence" value="ECO:0000314"/>
    <property type="project" value="UniProtKB"/>
</dbReference>
<dbReference type="GO" id="GO:0005085">
    <property type="term" value="F:guanyl-nucleotide exchange factor activity"/>
    <property type="evidence" value="ECO:0007669"/>
    <property type="project" value="UniProtKB-KW"/>
</dbReference>
<dbReference type="GO" id="GO:0035556">
    <property type="term" value="P:intracellular signal transduction"/>
    <property type="evidence" value="ECO:0007669"/>
    <property type="project" value="InterPro"/>
</dbReference>
<dbReference type="GO" id="GO:0030032">
    <property type="term" value="P:lamellipodium assembly"/>
    <property type="evidence" value="ECO:0000315"/>
    <property type="project" value="UniProtKB"/>
</dbReference>
<dbReference type="CDD" id="cd21265">
    <property type="entry name" value="CH_alphaPIX"/>
    <property type="match status" value="1"/>
</dbReference>
<dbReference type="CDD" id="cd01225">
    <property type="entry name" value="PH_Cool_Pix"/>
    <property type="match status" value="1"/>
</dbReference>
<dbReference type="CDD" id="cd00160">
    <property type="entry name" value="RhoGEF"/>
    <property type="match status" value="1"/>
</dbReference>
<dbReference type="CDD" id="cd12060">
    <property type="entry name" value="SH3_alphaPIX"/>
    <property type="match status" value="1"/>
</dbReference>
<dbReference type="FunFam" id="2.30.30.40:FF:000034">
    <property type="entry name" value="Rho guanine nucleotide exchange factor (GEF) 7"/>
    <property type="match status" value="1"/>
</dbReference>
<dbReference type="FunFam" id="1.20.900.10:FF:000016">
    <property type="entry name" value="Rho guanine nucleotide exchange factor 6"/>
    <property type="match status" value="1"/>
</dbReference>
<dbReference type="FunFam" id="2.30.29.30:FF:000094">
    <property type="entry name" value="Rho guanine nucleotide exchange factor 7"/>
    <property type="match status" value="1"/>
</dbReference>
<dbReference type="FunFam" id="1.10.418.10:FF:000049">
    <property type="entry name" value="Rho guanine nucleotide exchange factor 7 isoform X1"/>
    <property type="match status" value="1"/>
</dbReference>
<dbReference type="FunFam" id="1.20.5.390:FF:000001">
    <property type="entry name" value="rho guanine nucleotide exchange factor 7 isoform X1"/>
    <property type="match status" value="1"/>
</dbReference>
<dbReference type="Gene3D" id="1.10.418.10">
    <property type="entry name" value="Calponin-like domain"/>
    <property type="match status" value="1"/>
</dbReference>
<dbReference type="Gene3D" id="1.20.900.10">
    <property type="entry name" value="Dbl homology (DH) domain"/>
    <property type="match status" value="1"/>
</dbReference>
<dbReference type="Gene3D" id="1.20.5.390">
    <property type="entry name" value="L1 transposable element, trimerization domain"/>
    <property type="match status" value="1"/>
</dbReference>
<dbReference type="Gene3D" id="2.30.29.30">
    <property type="entry name" value="Pleckstrin-homology domain (PH domain)/Phosphotyrosine-binding domain (PTB)"/>
    <property type="match status" value="1"/>
</dbReference>
<dbReference type="Gene3D" id="2.30.30.40">
    <property type="entry name" value="SH3 Domains"/>
    <property type="match status" value="1"/>
</dbReference>
<dbReference type="InterPro" id="IPR035788">
    <property type="entry name" value="AlphaPIX_SH3"/>
</dbReference>
<dbReference type="InterPro" id="IPR001715">
    <property type="entry name" value="CH_dom"/>
</dbReference>
<dbReference type="InterPro" id="IPR036872">
    <property type="entry name" value="CH_dom_sf"/>
</dbReference>
<dbReference type="InterPro" id="IPR035899">
    <property type="entry name" value="DBL_dom_sf"/>
</dbReference>
<dbReference type="InterPro" id="IPR000219">
    <property type="entry name" value="DH_dom"/>
</dbReference>
<dbReference type="InterPro" id="IPR001331">
    <property type="entry name" value="GDS_CDC24_CS"/>
</dbReference>
<dbReference type="InterPro" id="IPR032409">
    <property type="entry name" value="GEF6/7_CC"/>
</dbReference>
<dbReference type="InterPro" id="IPR011993">
    <property type="entry name" value="PH-like_dom_sf"/>
</dbReference>
<dbReference type="InterPro" id="IPR046376">
    <property type="entry name" value="PH_Cool_Pix"/>
</dbReference>
<dbReference type="InterPro" id="IPR001849">
    <property type="entry name" value="PH_domain"/>
</dbReference>
<dbReference type="InterPro" id="IPR036028">
    <property type="entry name" value="SH3-like_dom_sf"/>
</dbReference>
<dbReference type="InterPro" id="IPR001452">
    <property type="entry name" value="SH3_domain"/>
</dbReference>
<dbReference type="InterPro" id="IPR003096">
    <property type="entry name" value="SM22_calponin"/>
</dbReference>
<dbReference type="PANTHER" id="PTHR46026:SF2">
    <property type="entry name" value="RHO GUANINE NUCLEOTIDE EXCHANGE FACTOR 6"/>
    <property type="match status" value="1"/>
</dbReference>
<dbReference type="PANTHER" id="PTHR46026">
    <property type="entry name" value="RHO-TYPE GUANINE NUCLEOTIDE EXCHANGE FACTOR, ISOFORM F"/>
    <property type="match status" value="1"/>
</dbReference>
<dbReference type="Pfam" id="PF16523">
    <property type="entry name" value="betaPIX_CC"/>
    <property type="match status" value="1"/>
</dbReference>
<dbReference type="Pfam" id="PF00307">
    <property type="entry name" value="CH"/>
    <property type="match status" value="1"/>
</dbReference>
<dbReference type="Pfam" id="PF00169">
    <property type="entry name" value="PH"/>
    <property type="match status" value="1"/>
</dbReference>
<dbReference type="Pfam" id="PF00621">
    <property type="entry name" value="RhoGEF"/>
    <property type="match status" value="1"/>
</dbReference>
<dbReference type="Pfam" id="PF16615">
    <property type="entry name" value="RhoGEF67_u1"/>
    <property type="match status" value="1"/>
</dbReference>
<dbReference type="Pfam" id="PF16614">
    <property type="entry name" value="RhoGEF67_u2"/>
    <property type="match status" value="1"/>
</dbReference>
<dbReference type="Pfam" id="PF07653">
    <property type="entry name" value="SH3_2"/>
    <property type="match status" value="1"/>
</dbReference>
<dbReference type="PRINTS" id="PR00452">
    <property type="entry name" value="SH3DOMAIN"/>
</dbReference>
<dbReference type="PRINTS" id="PR00888">
    <property type="entry name" value="SM22CALPONIN"/>
</dbReference>
<dbReference type="SMART" id="SM00033">
    <property type="entry name" value="CH"/>
    <property type="match status" value="1"/>
</dbReference>
<dbReference type="SMART" id="SM00233">
    <property type="entry name" value="PH"/>
    <property type="match status" value="1"/>
</dbReference>
<dbReference type="SMART" id="SM00325">
    <property type="entry name" value="RhoGEF"/>
    <property type="match status" value="1"/>
</dbReference>
<dbReference type="SMART" id="SM00326">
    <property type="entry name" value="SH3"/>
    <property type="match status" value="1"/>
</dbReference>
<dbReference type="SUPFAM" id="SSF47576">
    <property type="entry name" value="Calponin-homology domain, CH-domain"/>
    <property type="match status" value="1"/>
</dbReference>
<dbReference type="SUPFAM" id="SSF48065">
    <property type="entry name" value="DBL homology domain (DH-domain)"/>
    <property type="match status" value="1"/>
</dbReference>
<dbReference type="SUPFAM" id="SSF50729">
    <property type="entry name" value="PH domain-like"/>
    <property type="match status" value="1"/>
</dbReference>
<dbReference type="SUPFAM" id="SSF50044">
    <property type="entry name" value="SH3-domain"/>
    <property type="match status" value="1"/>
</dbReference>
<dbReference type="PROSITE" id="PS50021">
    <property type="entry name" value="CH"/>
    <property type="match status" value="1"/>
</dbReference>
<dbReference type="PROSITE" id="PS00741">
    <property type="entry name" value="DH_1"/>
    <property type="match status" value="1"/>
</dbReference>
<dbReference type="PROSITE" id="PS50010">
    <property type="entry name" value="DH_2"/>
    <property type="match status" value="1"/>
</dbReference>
<dbReference type="PROSITE" id="PS50003">
    <property type="entry name" value="PH_DOMAIN"/>
    <property type="match status" value="1"/>
</dbReference>
<dbReference type="PROSITE" id="PS50002">
    <property type="entry name" value="SH3"/>
    <property type="match status" value="1"/>
</dbReference>